<reference key="1">
    <citation type="journal article" date="2006" name="Proc. Natl. Acad. Sci. U.S.A.">
        <title>Multireplicon genome architecture of Lactobacillus salivarius.</title>
        <authorList>
            <person name="Claesson M.J."/>
            <person name="Li Y."/>
            <person name="Leahy S."/>
            <person name="Canchaya C."/>
            <person name="van Pijkeren J.P."/>
            <person name="Cerdeno-Tarraga A.M."/>
            <person name="Parkhill J."/>
            <person name="Flynn S."/>
            <person name="O'Sullivan G.C."/>
            <person name="Collins J.K."/>
            <person name="Higgins D."/>
            <person name="Shanahan F."/>
            <person name="Fitzgerald G.F."/>
            <person name="van Sinderen D."/>
            <person name="O'Toole P.W."/>
        </authorList>
    </citation>
    <scope>NUCLEOTIDE SEQUENCE [LARGE SCALE GENOMIC DNA]</scope>
    <source>
        <strain>UCC118</strain>
    </source>
</reference>
<proteinExistence type="inferred from homology"/>
<gene>
    <name evidence="1" type="primary">guaC</name>
    <name type="ordered locus">LSL_1139</name>
</gene>
<organism>
    <name type="scientific">Ligilactobacillus salivarius (strain UCC118)</name>
    <name type="common">Lactobacillus salivarius</name>
    <dbReference type="NCBI Taxonomy" id="362948"/>
    <lineage>
        <taxon>Bacteria</taxon>
        <taxon>Bacillati</taxon>
        <taxon>Bacillota</taxon>
        <taxon>Bacilli</taxon>
        <taxon>Lactobacillales</taxon>
        <taxon>Lactobacillaceae</taxon>
        <taxon>Ligilactobacillus</taxon>
    </lineage>
</organism>
<keyword id="KW-0521">NADP</keyword>
<keyword id="KW-0560">Oxidoreductase</keyword>
<keyword id="KW-1185">Reference proteome</keyword>
<accession>Q1WT04</accession>
<comment type="function">
    <text evidence="1">Catalyzes the irreversible NADPH-dependent deamination of GMP to IMP. It functions in the conversion of nucleobase, nucleoside and nucleotide derivatives of G to A nucleotides, and in maintaining the intracellular balance of A and G nucleotides.</text>
</comment>
<comment type="catalytic activity">
    <reaction evidence="1">
        <text>IMP + NH4(+) + NADP(+) = GMP + NADPH + 2 H(+)</text>
        <dbReference type="Rhea" id="RHEA:17185"/>
        <dbReference type="ChEBI" id="CHEBI:15378"/>
        <dbReference type="ChEBI" id="CHEBI:28938"/>
        <dbReference type="ChEBI" id="CHEBI:57783"/>
        <dbReference type="ChEBI" id="CHEBI:58053"/>
        <dbReference type="ChEBI" id="CHEBI:58115"/>
        <dbReference type="ChEBI" id="CHEBI:58349"/>
        <dbReference type="EC" id="1.7.1.7"/>
    </reaction>
</comment>
<comment type="similarity">
    <text evidence="1">Belongs to the IMPDH/GMPR family. GuaC type 2 subfamily.</text>
</comment>
<name>GUAC_LIGS1</name>
<feature type="chain" id="PRO_0000292053" description="GMP reductase">
    <location>
        <begin position="1"/>
        <end position="325"/>
    </location>
</feature>
<feature type="active site" description="Thioimidate intermediate" evidence="1">
    <location>
        <position position="174"/>
    </location>
</feature>
<feature type="binding site" evidence="1">
    <location>
        <begin position="203"/>
        <end position="226"/>
    </location>
    <ligand>
        <name>NADP(+)</name>
        <dbReference type="ChEBI" id="CHEBI:58349"/>
    </ligand>
</feature>
<dbReference type="EC" id="1.7.1.7" evidence="1"/>
<dbReference type="EMBL" id="CP000233">
    <property type="protein sequence ID" value="ABD99947.1"/>
    <property type="molecule type" value="Genomic_DNA"/>
</dbReference>
<dbReference type="RefSeq" id="WP_003700584.1">
    <property type="nucleotide sequence ID" value="NC_007929.1"/>
</dbReference>
<dbReference type="RefSeq" id="YP_536030.1">
    <property type="nucleotide sequence ID" value="NC_007929.1"/>
</dbReference>
<dbReference type="SMR" id="Q1WT04"/>
<dbReference type="STRING" id="362948.LSL_1139"/>
<dbReference type="KEGG" id="lsl:LSL_1139"/>
<dbReference type="PATRIC" id="fig|362948.14.peg.1213"/>
<dbReference type="HOGENOM" id="CLU_022552_5_0_9"/>
<dbReference type="OrthoDB" id="9805398at2"/>
<dbReference type="Proteomes" id="UP000006559">
    <property type="component" value="Chromosome"/>
</dbReference>
<dbReference type="GO" id="GO:0005829">
    <property type="term" value="C:cytosol"/>
    <property type="evidence" value="ECO:0007669"/>
    <property type="project" value="TreeGrafter"/>
</dbReference>
<dbReference type="GO" id="GO:1902560">
    <property type="term" value="C:GMP reductase complex"/>
    <property type="evidence" value="ECO:0007669"/>
    <property type="project" value="InterPro"/>
</dbReference>
<dbReference type="GO" id="GO:0003920">
    <property type="term" value="F:GMP reductase activity"/>
    <property type="evidence" value="ECO:0007669"/>
    <property type="project" value="UniProtKB-UniRule"/>
</dbReference>
<dbReference type="GO" id="GO:0006163">
    <property type="term" value="P:purine nucleotide metabolic process"/>
    <property type="evidence" value="ECO:0007669"/>
    <property type="project" value="UniProtKB-UniRule"/>
</dbReference>
<dbReference type="CDD" id="cd00381">
    <property type="entry name" value="IMPDH"/>
    <property type="match status" value="1"/>
</dbReference>
<dbReference type="FunFam" id="3.20.20.70:FF:000424">
    <property type="entry name" value="Inosine-5'-monophosphate dehydrogenase 2"/>
    <property type="match status" value="1"/>
</dbReference>
<dbReference type="Gene3D" id="3.20.20.70">
    <property type="entry name" value="Aldolase class I"/>
    <property type="match status" value="1"/>
</dbReference>
<dbReference type="HAMAP" id="MF_01511">
    <property type="entry name" value="GMP_reduct_type2"/>
    <property type="match status" value="1"/>
</dbReference>
<dbReference type="InterPro" id="IPR013785">
    <property type="entry name" value="Aldolase_TIM"/>
</dbReference>
<dbReference type="InterPro" id="IPR050139">
    <property type="entry name" value="GMP_reductase"/>
</dbReference>
<dbReference type="InterPro" id="IPR005994">
    <property type="entry name" value="GuaC_type_2"/>
</dbReference>
<dbReference type="InterPro" id="IPR015875">
    <property type="entry name" value="IMP_DH/GMP_Rdtase_CS"/>
</dbReference>
<dbReference type="InterPro" id="IPR001093">
    <property type="entry name" value="IMP_DH_GMPRt"/>
</dbReference>
<dbReference type="NCBIfam" id="TIGR01306">
    <property type="entry name" value="GMP_reduct_2"/>
    <property type="match status" value="1"/>
</dbReference>
<dbReference type="NCBIfam" id="NF003966">
    <property type="entry name" value="PRK05458.1"/>
    <property type="match status" value="1"/>
</dbReference>
<dbReference type="PANTHER" id="PTHR43170">
    <property type="entry name" value="GMP REDUCTASE"/>
    <property type="match status" value="1"/>
</dbReference>
<dbReference type="PANTHER" id="PTHR43170:SF5">
    <property type="entry name" value="GMP REDUCTASE"/>
    <property type="match status" value="1"/>
</dbReference>
<dbReference type="Pfam" id="PF00478">
    <property type="entry name" value="IMPDH"/>
    <property type="match status" value="1"/>
</dbReference>
<dbReference type="PIRSF" id="PIRSF036500">
    <property type="entry name" value="GMP_red_Firmic"/>
    <property type="match status" value="1"/>
</dbReference>
<dbReference type="SMART" id="SM01240">
    <property type="entry name" value="IMPDH"/>
    <property type="match status" value="1"/>
</dbReference>
<dbReference type="SUPFAM" id="SSF51412">
    <property type="entry name" value="Inosine monophosphate dehydrogenase (IMPDH)"/>
    <property type="match status" value="1"/>
</dbReference>
<dbReference type="PROSITE" id="PS00487">
    <property type="entry name" value="IMP_DH_GMP_RED"/>
    <property type="match status" value="1"/>
</dbReference>
<sequence>MPVFDYEDIQLVPNKCIVKSRSEVNTKVKFGPMTFKIPVVPANMQTIIDENLAVWLAKNGYFYIMHRFYENERVDFVKNMHDKGLFASISVGVKPAEYDLIDELSQKNLVPEYITIDIAHGHSDTVINMIKHIKHKLPGVFVIAGNVGTPEAVRELENAGADATKVGIGPGKACITKLKTGFGTGGWQLAAIRACAKAASKPIVADGGIRNNGDIAKSIRFGASMCMIGSLFAGHDETPGDIIEKDGKKFKTYFGSASQYQKGEYKNVEGKKLLLPYKGKIADTLREMQEDLQSAISYAGGKELLALRKVDYVIVKNSIYNGDML</sequence>
<evidence type="ECO:0000255" key="1">
    <source>
        <dbReference type="HAMAP-Rule" id="MF_01511"/>
    </source>
</evidence>
<protein>
    <recommendedName>
        <fullName evidence="1">GMP reductase</fullName>
        <ecNumber evidence="1">1.7.1.7</ecNumber>
    </recommendedName>
    <alternativeName>
        <fullName evidence="1">Guanosine 5'-monophosphate oxidoreductase</fullName>
        <shortName evidence="1">Guanosine monophosphate reductase</shortName>
    </alternativeName>
</protein>